<sequence length="1024" mass="110359">MKFFALFIQRPVATTLLTLAITLSGIIGFSLLPVSPLPQVDYPVIMVSASMPGADPETMASSVATPLERALGRIAGVNEMTSTSSLGSTRIILQFDLNRDINGAARDVQAALNAAQSLLPSGMPSRPTYRKMNPSDAPIMIMTLTSDTFSQGQLYDYASTKLAQKIAQTEGVSDVTVGGSSLPAVRVELNPSALFNQGVSLDAVRQAISAANVRRPQGSVDAAETHWQVQANDEIKTAEGYRPLIVHYNNGSPVRLQDVANVIDSVQDVRNAGMSAGQPAVLLVISREPGANIIATVDRIRAELPALRASIPASIQLNIAQDRSPTIRASLDEVERSLVIAVALVILVVFIFLRSGRATLIPAVAVPVSLIGTFAAMYLCGFSLNNLSLMALTIATGFVVDDAIVVLENISRHLEAGVKPMVAALRGVREVGFTVLSMSISLVAVFIPLLLMAGLPGRLFREFAVTLSVAIGISLVISLTLTPMMCAWLLRSHPKGQQQRIRGFGKVLLAIQQGYGRSLNWALGHTRWVMVVLLSTIALNVWLYISIPKTFFPEQDTGRMMGFIQADQSISFQSMQQKLKDFMQIVGADPAVDSVTGFTGGSRTNSGSMFISLKPLSERQETAQQVITRLRGKLAKEPGANLFLSSVQDIRVGGRHSNAAYQFTLLADDLAALREWEPKVRAALAKLPQLADVNSDQQDKGAEMALTYDRETMARLGIDVSEANALLNNAFGQRQISTIYQPLNQYKVVMEVAPEYTQDVSSLDKMFVINSNGQSIPLSYFAKWQPANAPLAVNHQGLSAASTISFNLPDGGSLSEATAAVERAMTELGVPSTVRGAFAGTAQVFQETLKSQLWLIMAAIATVYIVLGILYESYVHPLTILSTLPSAGVGALLALELFDAPFSLIALIGIMLLIGIVKKNAIMMVDFALDAQRNGNISAREAIFQASLLRFRPIIMTTLAALFGALPLVLSSGDGAELRQPLGITIVGGLVVSQLLTLYTTPVIYLYFDRLRNRFSKQPLMKLE</sequence>
<evidence type="ECO:0000255" key="1">
    <source>
        <dbReference type="HAMAP-Rule" id="MF_01424"/>
    </source>
</evidence>
<comment type="subunit">
    <text evidence="1">Part of a tripartite efflux system composed of MdtA, MdtB and MdtC. MdtC forms a heteromultimer with MdtB.</text>
</comment>
<comment type="subcellular location">
    <subcellularLocation>
        <location evidence="1">Cell inner membrane</location>
        <topology evidence="1">Multi-pass membrane protein</topology>
    </subcellularLocation>
</comment>
<comment type="similarity">
    <text evidence="1">Belongs to the resistance-nodulation-cell division (RND) (TC 2.A.6) family. MdtC subfamily.</text>
</comment>
<dbReference type="EMBL" id="CP000720">
    <property type="protein sequence ID" value="ABS46870.1"/>
    <property type="molecule type" value="Genomic_DNA"/>
</dbReference>
<dbReference type="RefSeq" id="WP_011192783.1">
    <property type="nucleotide sequence ID" value="NC_009708.1"/>
</dbReference>
<dbReference type="SMR" id="A7FG16"/>
<dbReference type="KEGG" id="ypi:YpsIP31758_1213"/>
<dbReference type="HOGENOM" id="CLU_002755_1_2_6"/>
<dbReference type="Proteomes" id="UP000002412">
    <property type="component" value="Chromosome"/>
</dbReference>
<dbReference type="GO" id="GO:0005886">
    <property type="term" value="C:plasma membrane"/>
    <property type="evidence" value="ECO:0007669"/>
    <property type="project" value="UniProtKB-SubCell"/>
</dbReference>
<dbReference type="GO" id="GO:0042910">
    <property type="term" value="F:xenobiotic transmembrane transporter activity"/>
    <property type="evidence" value="ECO:0007669"/>
    <property type="project" value="TreeGrafter"/>
</dbReference>
<dbReference type="FunFam" id="1.20.1640.10:FF:000001">
    <property type="entry name" value="Efflux pump membrane transporter"/>
    <property type="match status" value="1"/>
</dbReference>
<dbReference type="FunFam" id="3.30.70.1430:FF:000001">
    <property type="entry name" value="Efflux pump membrane transporter"/>
    <property type="match status" value="1"/>
</dbReference>
<dbReference type="FunFam" id="3.30.2090.10:FF:000004">
    <property type="entry name" value="Multidrug resistance protein MdtC"/>
    <property type="match status" value="1"/>
</dbReference>
<dbReference type="Gene3D" id="3.30.70.1430">
    <property type="entry name" value="Multidrug efflux transporter AcrB pore domain"/>
    <property type="match status" value="2"/>
</dbReference>
<dbReference type="Gene3D" id="3.30.70.1440">
    <property type="entry name" value="Multidrug efflux transporter AcrB pore domain"/>
    <property type="match status" value="1"/>
</dbReference>
<dbReference type="Gene3D" id="3.30.70.1320">
    <property type="entry name" value="Multidrug efflux transporter AcrB pore domain like"/>
    <property type="match status" value="1"/>
</dbReference>
<dbReference type="Gene3D" id="3.30.2090.10">
    <property type="entry name" value="Multidrug efflux transporter AcrB TolC docking domain, DN and DC subdomains"/>
    <property type="match status" value="2"/>
</dbReference>
<dbReference type="Gene3D" id="1.20.1640.10">
    <property type="entry name" value="Multidrug efflux transporter AcrB transmembrane domain"/>
    <property type="match status" value="2"/>
</dbReference>
<dbReference type="HAMAP" id="MF_01424">
    <property type="entry name" value="MdtC"/>
    <property type="match status" value="1"/>
</dbReference>
<dbReference type="InterPro" id="IPR027463">
    <property type="entry name" value="AcrB_DN_DC_subdom"/>
</dbReference>
<dbReference type="InterPro" id="IPR001036">
    <property type="entry name" value="Acrflvin-R"/>
</dbReference>
<dbReference type="InterPro" id="IPR023931">
    <property type="entry name" value="Multidrug-R_MdtC"/>
</dbReference>
<dbReference type="NCBIfam" id="NF007905">
    <property type="entry name" value="PRK10614.1"/>
    <property type="match status" value="1"/>
</dbReference>
<dbReference type="NCBIfam" id="NF033617">
    <property type="entry name" value="RND_permease_2"/>
    <property type="match status" value="1"/>
</dbReference>
<dbReference type="PANTHER" id="PTHR32063">
    <property type="match status" value="1"/>
</dbReference>
<dbReference type="PANTHER" id="PTHR32063:SF34">
    <property type="entry name" value="MULTIDRUG RESISTANCE PROTEIN MDTC"/>
    <property type="match status" value="1"/>
</dbReference>
<dbReference type="Pfam" id="PF00873">
    <property type="entry name" value="ACR_tran"/>
    <property type="match status" value="1"/>
</dbReference>
<dbReference type="PRINTS" id="PR00702">
    <property type="entry name" value="ACRIFLAVINRP"/>
</dbReference>
<dbReference type="SUPFAM" id="SSF82693">
    <property type="entry name" value="Multidrug efflux transporter AcrB pore domain, PN1, PN2, PC1 and PC2 subdomains"/>
    <property type="match status" value="4"/>
</dbReference>
<dbReference type="SUPFAM" id="SSF82714">
    <property type="entry name" value="Multidrug efflux transporter AcrB TolC docking domain, DN and DC subdomains"/>
    <property type="match status" value="2"/>
</dbReference>
<dbReference type="SUPFAM" id="SSF82866">
    <property type="entry name" value="Multidrug efflux transporter AcrB transmembrane domain"/>
    <property type="match status" value="2"/>
</dbReference>
<proteinExistence type="inferred from homology"/>
<keyword id="KW-0997">Cell inner membrane</keyword>
<keyword id="KW-1003">Cell membrane</keyword>
<keyword id="KW-0472">Membrane</keyword>
<keyword id="KW-0812">Transmembrane</keyword>
<keyword id="KW-1133">Transmembrane helix</keyword>
<keyword id="KW-0813">Transport</keyword>
<gene>
    <name evidence="1" type="primary">mdtC</name>
    <name type="ordered locus">YpsIP31758_1213</name>
</gene>
<feature type="chain" id="PRO_1000068510" description="Multidrug resistance protein MdtC">
    <location>
        <begin position="1"/>
        <end position="1024"/>
    </location>
</feature>
<feature type="transmembrane region" description="Helical" evidence="1">
    <location>
        <begin position="12"/>
        <end position="32"/>
    </location>
</feature>
<feature type="transmembrane region" description="Helical" evidence="1">
    <location>
        <begin position="333"/>
        <end position="353"/>
    </location>
</feature>
<feature type="transmembrane region" description="Helical" evidence="1">
    <location>
        <begin position="360"/>
        <end position="380"/>
    </location>
</feature>
<feature type="transmembrane region" description="Helical" evidence="1">
    <location>
        <begin position="387"/>
        <end position="407"/>
    </location>
</feature>
<feature type="transmembrane region" description="Helical" evidence="1">
    <location>
        <begin position="435"/>
        <end position="455"/>
    </location>
</feature>
<feature type="transmembrane region" description="Helical" evidence="1">
    <location>
        <begin position="469"/>
        <end position="489"/>
    </location>
</feature>
<feature type="transmembrane region" description="Helical" evidence="1">
    <location>
        <begin position="528"/>
        <end position="548"/>
    </location>
</feature>
<feature type="transmembrane region" description="Helical" evidence="1">
    <location>
        <begin position="853"/>
        <end position="873"/>
    </location>
</feature>
<feature type="transmembrane region" description="Helical" evidence="1">
    <location>
        <begin position="875"/>
        <end position="895"/>
    </location>
</feature>
<feature type="transmembrane region" description="Helical" evidence="1">
    <location>
        <begin position="897"/>
        <end position="917"/>
    </location>
</feature>
<feature type="transmembrane region" description="Helical" evidence="1">
    <location>
        <begin position="953"/>
        <end position="973"/>
    </location>
</feature>
<feature type="transmembrane region" description="Helical" evidence="1">
    <location>
        <begin position="984"/>
        <end position="1004"/>
    </location>
</feature>
<organism>
    <name type="scientific">Yersinia pseudotuberculosis serotype O:1b (strain IP 31758)</name>
    <dbReference type="NCBI Taxonomy" id="349747"/>
    <lineage>
        <taxon>Bacteria</taxon>
        <taxon>Pseudomonadati</taxon>
        <taxon>Pseudomonadota</taxon>
        <taxon>Gammaproteobacteria</taxon>
        <taxon>Enterobacterales</taxon>
        <taxon>Yersiniaceae</taxon>
        <taxon>Yersinia</taxon>
    </lineage>
</organism>
<protein>
    <recommendedName>
        <fullName evidence="1">Multidrug resistance protein MdtC</fullName>
    </recommendedName>
    <alternativeName>
        <fullName evidence="1">Multidrug transporter MdtC</fullName>
    </alternativeName>
</protein>
<name>MDTC_YERP3</name>
<reference key="1">
    <citation type="journal article" date="2007" name="PLoS Genet.">
        <title>The complete genome sequence of Yersinia pseudotuberculosis IP31758, the causative agent of Far East scarlet-like fever.</title>
        <authorList>
            <person name="Eppinger M."/>
            <person name="Rosovitz M.J."/>
            <person name="Fricke W.F."/>
            <person name="Rasko D.A."/>
            <person name="Kokorina G."/>
            <person name="Fayolle C."/>
            <person name="Lindler L.E."/>
            <person name="Carniel E."/>
            <person name="Ravel J."/>
        </authorList>
    </citation>
    <scope>NUCLEOTIDE SEQUENCE [LARGE SCALE GENOMIC DNA]</scope>
    <source>
        <strain>IP 31758</strain>
    </source>
</reference>
<accession>A7FG16</accession>